<organism>
    <name type="scientific">Homo sapiens</name>
    <name type="common">Human</name>
    <dbReference type="NCBI Taxonomy" id="9606"/>
    <lineage>
        <taxon>Eukaryota</taxon>
        <taxon>Metazoa</taxon>
        <taxon>Chordata</taxon>
        <taxon>Craniata</taxon>
        <taxon>Vertebrata</taxon>
        <taxon>Euteleostomi</taxon>
        <taxon>Mammalia</taxon>
        <taxon>Eutheria</taxon>
        <taxon>Euarchontoglires</taxon>
        <taxon>Primates</taxon>
        <taxon>Haplorrhini</taxon>
        <taxon>Catarrhini</taxon>
        <taxon>Hominidae</taxon>
        <taxon>Homo</taxon>
    </lineage>
</organism>
<accession>P04259</accession>
<accession>P48669</accession>
<sequence length="564" mass="60067">MASTSTTIRSHSSSRRGFSANSARLPGVSRSGFSSISVSRSRGSGGLGGACGGAGFGSRSLYGLGGSKRISIGGGSCAISGGYGSRAGGSYGFGGAGSGFGFGGGAGIGFGLGGGAGLAGGFGGPGFPVCPPGGIQEVTVNQSLLTPLNLQIDPAIQRVRAEEREQIKTLNNKFASFIDKVRFLEQQNKVLDTKWTLLQEQGTKTVRQNLEPLFEQYINNLRRQLDNIVGERGRLDSELRNMQDLVEDLKNKYEDEINKRTAAENEFVTLKKDVDAAYMNKVELQAKADTLTDEINFLRALYDAELSQMQTHISDTSVVLSMDNNRNLDLDSIIAEVKAQYEEIAQRSRAEAESWYQTKYEELQITAGRHGDDLRNTKQEIAEINRMIQRLRSEIDHVKKQCANLQAAIADAEQRGEMALKDAKNKLEGLEDALQKAKQDLARLLKEYQELMNVKLALDVEIATYRKLLEGEECRLNGEGVGQVNISVVQSTVSSGYGGASGVGSGLGLGGGSSYSYGSGLGVGGGFSSSSGRATGGGLSSVGGGSSTIKYTTTSSSSRKSYKH</sequence>
<feature type="initiator methionine" description="Removed" evidence="8">
    <location>
        <position position="1"/>
    </location>
</feature>
<feature type="chain" id="PRO_0000063732" description="Keratin, type II cytoskeletal 6B">
    <location>
        <begin position="2"/>
        <end position="564"/>
    </location>
</feature>
<feature type="domain" description="IF rod" evidence="1">
    <location>
        <begin position="163"/>
        <end position="476"/>
    </location>
</feature>
<feature type="region of interest" description="Disordered" evidence="2">
    <location>
        <begin position="1"/>
        <end position="23"/>
    </location>
</feature>
<feature type="region of interest" description="Head">
    <location>
        <begin position="2"/>
        <end position="162"/>
    </location>
</feature>
<feature type="region of interest" description="Coil 1A">
    <location>
        <begin position="163"/>
        <end position="198"/>
    </location>
</feature>
<feature type="region of interest" description="Linker 1">
    <location>
        <begin position="199"/>
        <end position="217"/>
    </location>
</feature>
<feature type="region of interest" description="Coil 1B">
    <location>
        <begin position="218"/>
        <end position="309"/>
    </location>
</feature>
<feature type="region of interest" description="Linker 12">
    <location>
        <begin position="310"/>
        <end position="333"/>
    </location>
</feature>
<feature type="region of interest" description="Coil 2">
    <location>
        <begin position="334"/>
        <end position="472"/>
    </location>
</feature>
<feature type="region of interest" description="Tail">
    <location>
        <begin position="473"/>
        <end position="564"/>
    </location>
</feature>
<feature type="region of interest" description="Disordered" evidence="2">
    <location>
        <begin position="533"/>
        <end position="564"/>
    </location>
</feature>
<feature type="compositionally biased region" description="Low complexity" evidence="2">
    <location>
        <begin position="1"/>
        <end position="11"/>
    </location>
</feature>
<feature type="compositionally biased region" description="Gly residues" evidence="2">
    <location>
        <begin position="534"/>
        <end position="546"/>
    </location>
</feature>
<feature type="compositionally biased region" description="Low complexity" evidence="2">
    <location>
        <begin position="547"/>
        <end position="564"/>
    </location>
</feature>
<feature type="site" description="Stutter">
    <location>
        <position position="414"/>
    </location>
</feature>
<feature type="modified residue" description="N-acetylalanine" evidence="8">
    <location>
        <position position="2"/>
    </location>
</feature>
<feature type="sequence variant" id="VAR_021265" description="In dbSNP:rs428894." evidence="5 6">
    <original>N</original>
    <variation>S</variation>
    <location>
        <position position="21"/>
    </location>
</feature>
<feature type="sequence variant" id="VAR_021266" description="In dbSNP:rs652423." evidence="5 6">
    <original>N</original>
    <variation>S</variation>
    <location>
        <position position="227"/>
    </location>
</feature>
<feature type="sequence variant" id="VAR_021267" description="In dbSNP:rs437014." evidence="5 6">
    <original>I</original>
    <variation>V</variation>
    <location>
        <position position="365"/>
    </location>
</feature>
<feature type="sequence variant" id="VAR_023062" description="In PC4; dbSNP:rs60627726." evidence="3 4 7">
    <original>E</original>
    <variation>K</variation>
    <location>
        <position position="472"/>
    </location>
</feature>
<feature type="sequence conflict" description="In Ref. 2; AAA59466." evidence="9" ref="2">
    <original>GS</original>
    <variation>AG</variation>
    <location>
        <begin position="89"/>
        <end position="90"/>
    </location>
</feature>
<feature type="sequence conflict" description="In Ref. 2; AAA59466." evidence="9" ref="2">
    <original>AG</original>
    <variation>PA</variation>
    <location>
        <begin position="116"/>
        <end position="117"/>
    </location>
</feature>
<feature type="sequence conflict" description="In Ref. 2; AAA59466." evidence="9" ref="2">
    <original>AGG</original>
    <variation>LC</variation>
    <location>
        <begin position="119"/>
        <end position="121"/>
    </location>
</feature>
<feature type="sequence conflict" description="In Ref. 2; AAA59466." evidence="9" ref="2">
    <original>VR</original>
    <variation>IG</variation>
    <location>
        <begin position="159"/>
        <end position="160"/>
    </location>
</feature>
<feature type="sequence conflict" description="In Ref. 2; AAA59466." evidence="9" ref="2">
    <original>D</original>
    <variation>V</variation>
    <location>
        <position position="255"/>
    </location>
</feature>
<keyword id="KW-0007">Acetylation</keyword>
<keyword id="KW-0175">Coiled coil</keyword>
<keyword id="KW-0903">Direct protein sequencing</keyword>
<keyword id="KW-0225">Disease variant</keyword>
<keyword id="KW-0038">Ectodermal dysplasia</keyword>
<keyword id="KW-0403">Intermediate filament</keyword>
<keyword id="KW-0416">Keratin</keyword>
<keyword id="KW-1007">Palmoplantar keratoderma</keyword>
<keyword id="KW-1267">Proteomics identification</keyword>
<keyword id="KW-1185">Reference proteome</keyword>
<proteinExistence type="evidence at protein level"/>
<reference key="1">
    <citation type="journal article" date="1995" name="J. Biol. Chem.">
        <title>Cloning and characterization of multiple human genes and cDNAs encoding highly related type II keratin 6 isoforms.</title>
        <authorList>
            <person name="Takahashi K."/>
            <person name="Paladini R.D."/>
            <person name="Coulombe P.A."/>
        </authorList>
    </citation>
    <scope>NUCLEOTIDE SEQUENCE [GENOMIC DNA]</scope>
    <scope>VARIANTS SER-21; SER-227 AND VAL-365</scope>
    <source>
        <tissue>Skin</tissue>
    </source>
</reference>
<reference key="2">
    <citation type="journal article" date="1985" name="Proc. Natl. Acad. Sci. U.S.A.">
        <title>The sequence of a type II keratin gene expressed in human skin: conservation of structure among all intermediate filament genes.</title>
        <authorList>
            <person name="Tyner A.L."/>
            <person name="Eichman M.J."/>
            <person name="Fuchs E."/>
        </authorList>
    </citation>
    <scope>NUCLEOTIDE SEQUENCE [GENOMIC DNA]</scope>
    <scope>VARIANTS SER-21; SER-227 AND VAL-365</scope>
</reference>
<reference key="3">
    <citation type="journal article" date="2006" name="Nature">
        <title>The finished DNA sequence of human chromosome 12.</title>
        <authorList>
            <person name="Scherer S.E."/>
            <person name="Muzny D.M."/>
            <person name="Buhay C.J."/>
            <person name="Chen R."/>
            <person name="Cree A."/>
            <person name="Ding Y."/>
            <person name="Dugan-Rocha S."/>
            <person name="Gill R."/>
            <person name="Gunaratne P."/>
            <person name="Harris R.A."/>
            <person name="Hawes A.C."/>
            <person name="Hernandez J."/>
            <person name="Hodgson A.V."/>
            <person name="Hume J."/>
            <person name="Jackson A."/>
            <person name="Khan Z.M."/>
            <person name="Kovar-Smith C."/>
            <person name="Lewis L.R."/>
            <person name="Lozado R.J."/>
            <person name="Metzker M.L."/>
            <person name="Milosavljevic A."/>
            <person name="Miner G.R."/>
            <person name="Montgomery K.T."/>
            <person name="Morgan M.B."/>
            <person name="Nazareth L.V."/>
            <person name="Scott G."/>
            <person name="Sodergren E."/>
            <person name="Song X.-Z."/>
            <person name="Steffen D."/>
            <person name="Lovering R.C."/>
            <person name="Wheeler D.A."/>
            <person name="Worley K.C."/>
            <person name="Yuan Y."/>
            <person name="Zhang Z."/>
            <person name="Adams C.Q."/>
            <person name="Ansari-Lari M.A."/>
            <person name="Ayele M."/>
            <person name="Brown M.J."/>
            <person name="Chen G."/>
            <person name="Chen Z."/>
            <person name="Clerc-Blankenburg K.P."/>
            <person name="Davis C."/>
            <person name="Delgado O."/>
            <person name="Dinh H.H."/>
            <person name="Draper H."/>
            <person name="Gonzalez-Garay M.L."/>
            <person name="Havlak P."/>
            <person name="Jackson L.R."/>
            <person name="Jacob L.S."/>
            <person name="Kelly S.H."/>
            <person name="Li L."/>
            <person name="Li Z."/>
            <person name="Liu J."/>
            <person name="Liu W."/>
            <person name="Lu J."/>
            <person name="Maheshwari M."/>
            <person name="Nguyen B.-V."/>
            <person name="Okwuonu G.O."/>
            <person name="Pasternak S."/>
            <person name="Perez L.M."/>
            <person name="Plopper F.J.H."/>
            <person name="Santibanez J."/>
            <person name="Shen H."/>
            <person name="Tabor P.E."/>
            <person name="Verduzco D."/>
            <person name="Waldron L."/>
            <person name="Wang Q."/>
            <person name="Williams G.A."/>
            <person name="Zhang J."/>
            <person name="Zhou J."/>
            <person name="Allen C.C."/>
            <person name="Amin A.G."/>
            <person name="Anyalebechi V."/>
            <person name="Bailey M."/>
            <person name="Barbaria J.A."/>
            <person name="Bimage K.E."/>
            <person name="Bryant N.P."/>
            <person name="Burch P.E."/>
            <person name="Burkett C.E."/>
            <person name="Burrell K.L."/>
            <person name="Calderon E."/>
            <person name="Cardenas V."/>
            <person name="Carter K."/>
            <person name="Casias K."/>
            <person name="Cavazos I."/>
            <person name="Cavazos S.R."/>
            <person name="Ceasar H."/>
            <person name="Chacko J."/>
            <person name="Chan S.N."/>
            <person name="Chavez D."/>
            <person name="Christopoulos C."/>
            <person name="Chu J."/>
            <person name="Cockrell R."/>
            <person name="Cox C.D."/>
            <person name="Dang M."/>
            <person name="Dathorne S.R."/>
            <person name="David R."/>
            <person name="Davis C.M."/>
            <person name="Davy-Carroll L."/>
            <person name="Deshazo D.R."/>
            <person name="Donlin J.E."/>
            <person name="D'Souza L."/>
            <person name="Eaves K.A."/>
            <person name="Egan A."/>
            <person name="Emery-Cohen A.J."/>
            <person name="Escotto M."/>
            <person name="Flagg N."/>
            <person name="Forbes L.D."/>
            <person name="Gabisi A.M."/>
            <person name="Garza M."/>
            <person name="Hamilton C."/>
            <person name="Henderson N."/>
            <person name="Hernandez O."/>
            <person name="Hines S."/>
            <person name="Hogues M.E."/>
            <person name="Huang M."/>
            <person name="Idlebird D.G."/>
            <person name="Johnson R."/>
            <person name="Jolivet A."/>
            <person name="Jones S."/>
            <person name="Kagan R."/>
            <person name="King L.M."/>
            <person name="Leal B."/>
            <person name="Lebow H."/>
            <person name="Lee S."/>
            <person name="LeVan J.M."/>
            <person name="Lewis L.C."/>
            <person name="London P."/>
            <person name="Lorensuhewa L.M."/>
            <person name="Loulseged H."/>
            <person name="Lovett D.A."/>
            <person name="Lucier A."/>
            <person name="Lucier R.L."/>
            <person name="Ma J."/>
            <person name="Madu R.C."/>
            <person name="Mapua P."/>
            <person name="Martindale A.D."/>
            <person name="Martinez E."/>
            <person name="Massey E."/>
            <person name="Mawhiney S."/>
            <person name="Meador M.G."/>
            <person name="Mendez S."/>
            <person name="Mercado C."/>
            <person name="Mercado I.C."/>
            <person name="Merritt C.E."/>
            <person name="Miner Z.L."/>
            <person name="Minja E."/>
            <person name="Mitchell T."/>
            <person name="Mohabbat F."/>
            <person name="Mohabbat K."/>
            <person name="Montgomery B."/>
            <person name="Moore N."/>
            <person name="Morris S."/>
            <person name="Munidasa M."/>
            <person name="Ngo R.N."/>
            <person name="Nguyen N.B."/>
            <person name="Nickerson E."/>
            <person name="Nwaokelemeh O.O."/>
            <person name="Nwokenkwo S."/>
            <person name="Obregon M."/>
            <person name="Oguh M."/>
            <person name="Oragunye N."/>
            <person name="Oviedo R.J."/>
            <person name="Parish B.J."/>
            <person name="Parker D.N."/>
            <person name="Parrish J."/>
            <person name="Parks K.L."/>
            <person name="Paul H.A."/>
            <person name="Payton B.A."/>
            <person name="Perez A."/>
            <person name="Perrin W."/>
            <person name="Pickens A."/>
            <person name="Primus E.L."/>
            <person name="Pu L.-L."/>
            <person name="Puazo M."/>
            <person name="Quiles M.M."/>
            <person name="Quiroz J.B."/>
            <person name="Rabata D."/>
            <person name="Reeves K."/>
            <person name="Ruiz S.J."/>
            <person name="Shao H."/>
            <person name="Sisson I."/>
            <person name="Sonaike T."/>
            <person name="Sorelle R.P."/>
            <person name="Sutton A.E."/>
            <person name="Svatek A.F."/>
            <person name="Svetz L.A."/>
            <person name="Tamerisa K.S."/>
            <person name="Taylor T.R."/>
            <person name="Teague B."/>
            <person name="Thomas N."/>
            <person name="Thorn R.D."/>
            <person name="Trejos Z.Y."/>
            <person name="Trevino B.K."/>
            <person name="Ukegbu O.N."/>
            <person name="Urban J.B."/>
            <person name="Vasquez L.I."/>
            <person name="Vera V.A."/>
            <person name="Villasana D.M."/>
            <person name="Wang L."/>
            <person name="Ward-Moore S."/>
            <person name="Warren J.T."/>
            <person name="Wei X."/>
            <person name="White F."/>
            <person name="Williamson A.L."/>
            <person name="Wleczyk R."/>
            <person name="Wooden H.S."/>
            <person name="Wooden S.H."/>
            <person name="Yen J."/>
            <person name="Yoon L."/>
            <person name="Yoon V."/>
            <person name="Zorrilla S.E."/>
            <person name="Nelson D."/>
            <person name="Kucherlapati R."/>
            <person name="Weinstock G."/>
            <person name="Gibbs R.A."/>
        </authorList>
    </citation>
    <scope>NUCLEOTIDE SEQUENCE [LARGE SCALE GENOMIC DNA]</scope>
</reference>
<reference key="4">
    <citation type="journal article" date="2004" name="Genome Res.">
        <title>The status, quality, and expansion of the NIH full-length cDNA project: the Mammalian Gene Collection (MGC).</title>
        <authorList>
            <consortium name="The MGC Project Team"/>
        </authorList>
    </citation>
    <scope>NUCLEOTIDE SEQUENCE [LARGE SCALE MRNA]</scope>
    <source>
        <tissue>Skin</tissue>
    </source>
</reference>
<reference key="5">
    <citation type="submission" date="2008-03" db="UniProtKB">
        <authorList>
            <person name="Bienvenut W.V."/>
            <person name="Vousden K.H."/>
            <person name="Lukashchuk N."/>
        </authorList>
    </citation>
    <scope>PROTEIN SEQUENCE OF 2-9; 16-24; 31-40; 43-86; 169-189; 195-204; 208-369; 376-386; 425-436; 456-475 AND 534-550</scope>
    <scope>CLEAVAGE OF INITIATOR METHIONINE</scope>
    <scope>ACETYLATION AT ALA-2</scope>
    <scope>IDENTIFICATION BY MASS SPECTROMETRY</scope>
    <source>
        <tissue>Lung carcinoma</tissue>
    </source>
</reference>
<reference key="6">
    <citation type="journal article" date="1992" name="Electrophoresis">
        <title>Microsequences of 145 proteins recorded in the two-dimensional gel protein database of normal human epidermal keratinocytes.</title>
        <authorList>
            <person name="Rasmussen H.H."/>
            <person name="van Damme J."/>
            <person name="Puype M."/>
            <person name="Gesser B."/>
            <person name="Celis J.E."/>
            <person name="Vandekerckhove J."/>
        </authorList>
    </citation>
    <scope>PROTEIN SEQUENCE OF 195-203 AND 350-356</scope>
    <source>
        <tissue>Keratinocyte</tissue>
    </source>
</reference>
<reference key="7">
    <citation type="journal article" date="1998" name="Hum. Mol. Genet.">
        <title>A mutation in human keratin K6b produces a phenocopy of the K17 disorder pachyonychia congenita type 2.</title>
        <authorList>
            <person name="Smith F.J.D."/>
            <person name="Jonkman M.F."/>
            <person name="van Goor H."/>
            <person name="Coleman C.M."/>
            <person name="Covello S.P."/>
            <person name="Uitto J."/>
            <person name="McLean W.H.I."/>
        </authorList>
    </citation>
    <scope>VARIANT PC4 LYS-472</scope>
</reference>
<reference key="8">
    <citation type="journal article" date="2005" name="J. Investig. Dermatol. Symp. Proc.">
        <title>The genetic basis of pachyonychia congenita.</title>
        <authorList>
            <person name="Smith F.J."/>
            <person name="Liao H."/>
            <person name="Cassidy A.J."/>
            <person name="Stewart A."/>
            <person name="Hamill K.J."/>
            <person name="Wood P."/>
            <person name="Joval I."/>
            <person name="van Steensel M.A."/>
            <person name="Bjoerck E."/>
            <person name="Callif-Daley F."/>
            <person name="Pals G."/>
            <person name="Collins P."/>
            <person name="Leachman S.A."/>
            <person name="Munro C.S."/>
            <person name="McLean W.H."/>
        </authorList>
    </citation>
    <scope>VARIANT PC4 LYS-472</scope>
</reference>
<reference key="9">
    <citation type="journal article" date="2011" name="J. Invest. Dermatol.">
        <title>A large mutational study in pachyonychia congenita.</title>
        <authorList>
            <person name="Wilson N.J."/>
            <person name="Leachman S.A."/>
            <person name="Hansen C.D."/>
            <person name="McMullan A.C."/>
            <person name="Milstone L.M."/>
            <person name="Schwartz M.E."/>
            <person name="McLean W.H."/>
            <person name="Hull P.R."/>
            <person name="Smith F.J."/>
        </authorList>
    </citation>
    <scope>VARIANT PC4 LYS-472</scope>
</reference>
<dbReference type="EMBL" id="L42592">
    <property type="protein sequence ID" value="AAC41768.1"/>
    <property type="molecule type" value="Genomic_DNA"/>
</dbReference>
<dbReference type="EMBL" id="L42584">
    <property type="protein sequence ID" value="AAC41768.1"/>
    <property type="status" value="JOINED"/>
    <property type="molecule type" value="Genomic_DNA"/>
</dbReference>
<dbReference type="EMBL" id="L42585">
    <property type="protein sequence ID" value="AAC41768.1"/>
    <property type="status" value="JOINED"/>
    <property type="molecule type" value="Genomic_DNA"/>
</dbReference>
<dbReference type="EMBL" id="L42586">
    <property type="protein sequence ID" value="AAC41768.1"/>
    <property type="status" value="JOINED"/>
    <property type="molecule type" value="Genomic_DNA"/>
</dbReference>
<dbReference type="EMBL" id="L42587">
    <property type="protein sequence ID" value="AAC41768.1"/>
    <property type="status" value="JOINED"/>
    <property type="molecule type" value="Genomic_DNA"/>
</dbReference>
<dbReference type="EMBL" id="L42588">
    <property type="protein sequence ID" value="AAC41768.1"/>
    <property type="status" value="JOINED"/>
    <property type="molecule type" value="Genomic_DNA"/>
</dbReference>
<dbReference type="EMBL" id="L42589">
    <property type="protein sequence ID" value="AAC41768.1"/>
    <property type="status" value="JOINED"/>
    <property type="molecule type" value="Genomic_DNA"/>
</dbReference>
<dbReference type="EMBL" id="L42590">
    <property type="protein sequence ID" value="AAC41768.1"/>
    <property type="status" value="JOINED"/>
    <property type="molecule type" value="Genomic_DNA"/>
</dbReference>
<dbReference type="EMBL" id="L42612">
    <property type="protein sequence ID" value="AAC41771.1"/>
    <property type="molecule type" value="mRNA"/>
</dbReference>
<dbReference type="EMBL" id="L00205">
    <property type="protein sequence ID" value="AAA59466.1"/>
    <property type="molecule type" value="Genomic_DNA"/>
</dbReference>
<dbReference type="EMBL" id="M11229">
    <property type="protein sequence ID" value="AAA59466.1"/>
    <property type="status" value="JOINED"/>
    <property type="molecule type" value="Genomic_DNA"/>
</dbReference>
<dbReference type="EMBL" id="L00198">
    <property type="protein sequence ID" value="AAA59466.1"/>
    <property type="status" value="JOINED"/>
    <property type="molecule type" value="Genomic_DNA"/>
</dbReference>
<dbReference type="EMBL" id="L00199">
    <property type="protein sequence ID" value="AAA59466.1"/>
    <property type="status" value="JOINED"/>
    <property type="molecule type" value="Genomic_DNA"/>
</dbReference>
<dbReference type="EMBL" id="L00200">
    <property type="protein sequence ID" value="AAA59466.1"/>
    <property type="status" value="JOINED"/>
    <property type="molecule type" value="Genomic_DNA"/>
</dbReference>
<dbReference type="EMBL" id="L00201">
    <property type="protein sequence ID" value="AAA59466.1"/>
    <property type="status" value="JOINED"/>
    <property type="molecule type" value="Genomic_DNA"/>
</dbReference>
<dbReference type="EMBL" id="L00202">
    <property type="protein sequence ID" value="AAA59466.1"/>
    <property type="status" value="JOINED"/>
    <property type="molecule type" value="Genomic_DNA"/>
</dbReference>
<dbReference type="EMBL" id="L00203">
    <property type="protein sequence ID" value="AAA59466.1"/>
    <property type="status" value="JOINED"/>
    <property type="molecule type" value="Genomic_DNA"/>
</dbReference>
<dbReference type="EMBL" id="L00204">
    <property type="protein sequence ID" value="AAA59466.1"/>
    <property type="status" value="JOINED"/>
    <property type="molecule type" value="Genomic_DNA"/>
</dbReference>
<dbReference type="EMBL" id="AC055736">
    <property type="status" value="NOT_ANNOTATED_CDS"/>
    <property type="molecule type" value="Genomic_DNA"/>
</dbReference>
<dbReference type="EMBL" id="BC034535">
    <property type="protein sequence ID" value="AAH34535.1"/>
    <property type="molecule type" value="mRNA"/>
</dbReference>
<dbReference type="CCDS" id="CCDS8828.1"/>
<dbReference type="PIR" id="I61767">
    <property type="entry name" value="KRHUEB"/>
</dbReference>
<dbReference type="PIR" id="I61771">
    <property type="entry name" value="I61771"/>
</dbReference>
<dbReference type="RefSeq" id="NP_005546.2">
    <property type="nucleotide sequence ID" value="NM_005555.4"/>
</dbReference>
<dbReference type="SMR" id="P04259"/>
<dbReference type="BioGRID" id="110052">
    <property type="interactions" value="137"/>
</dbReference>
<dbReference type="CORUM" id="P04259"/>
<dbReference type="FunCoup" id="P04259">
    <property type="interactions" value="360"/>
</dbReference>
<dbReference type="IntAct" id="P04259">
    <property type="interactions" value="53"/>
</dbReference>
<dbReference type="MINT" id="P04259"/>
<dbReference type="STRING" id="9606.ENSP00000252252"/>
<dbReference type="Allergome" id="415">
    <property type="allergen name" value="Hom s 5"/>
</dbReference>
<dbReference type="GlyGen" id="P04259">
    <property type="glycosylation" value="1 site, 1 O-linked glycan (1 site)"/>
</dbReference>
<dbReference type="iPTMnet" id="P04259"/>
<dbReference type="PhosphoSitePlus" id="P04259"/>
<dbReference type="SwissPalm" id="P04259"/>
<dbReference type="BioMuta" id="KRT6B"/>
<dbReference type="DMDM" id="238054404"/>
<dbReference type="jPOST" id="P04259"/>
<dbReference type="MassIVE" id="P04259"/>
<dbReference type="PaxDb" id="9606-ENSP00000252252"/>
<dbReference type="PeptideAtlas" id="P04259"/>
<dbReference type="PRIDE" id="P04259"/>
<dbReference type="ProteomicsDB" id="51693"/>
<dbReference type="TopDownProteomics" id="P04259"/>
<dbReference type="Antibodypedia" id="43084">
    <property type="antibodies" value="238 antibodies from 23 providers"/>
</dbReference>
<dbReference type="DNASU" id="3854"/>
<dbReference type="Ensembl" id="ENST00000252252.4">
    <property type="protein sequence ID" value="ENSP00000252252.3"/>
    <property type="gene ID" value="ENSG00000185479.6"/>
</dbReference>
<dbReference type="GeneID" id="3854"/>
<dbReference type="KEGG" id="hsa:3854"/>
<dbReference type="MANE-Select" id="ENST00000252252.4">
    <property type="protein sequence ID" value="ENSP00000252252.3"/>
    <property type="RefSeq nucleotide sequence ID" value="NM_005555.4"/>
    <property type="RefSeq protein sequence ID" value="NP_005546.2"/>
</dbReference>
<dbReference type="UCSC" id="uc001sak.3">
    <property type="organism name" value="human"/>
</dbReference>
<dbReference type="AGR" id="HGNC:6444"/>
<dbReference type="CTD" id="3854"/>
<dbReference type="DisGeNET" id="3854"/>
<dbReference type="GeneCards" id="KRT6B"/>
<dbReference type="GeneReviews" id="KRT6B"/>
<dbReference type="HGNC" id="HGNC:6444">
    <property type="gene designation" value="KRT6B"/>
</dbReference>
<dbReference type="HPA" id="ENSG00000185479">
    <property type="expression patterns" value="Tissue enhanced (cervix, esophagus, skin, vagina)"/>
</dbReference>
<dbReference type="MalaCards" id="KRT6B"/>
<dbReference type="MIM" id="148042">
    <property type="type" value="gene"/>
</dbReference>
<dbReference type="MIM" id="615728">
    <property type="type" value="phenotype"/>
</dbReference>
<dbReference type="neXtProt" id="NX_P04259"/>
<dbReference type="OpenTargets" id="ENSG00000185479"/>
<dbReference type="Orphanet" id="2309">
    <property type="disease" value="Pachyonychia congenita"/>
</dbReference>
<dbReference type="PharmGKB" id="PA30232"/>
<dbReference type="VEuPathDB" id="HostDB:ENSG00000185479"/>
<dbReference type="eggNOG" id="ENOG502QURK">
    <property type="taxonomic scope" value="Eukaryota"/>
</dbReference>
<dbReference type="GeneTree" id="ENSGT00940000154600"/>
<dbReference type="HOGENOM" id="CLU_012560_6_1_1"/>
<dbReference type="InParanoid" id="P04259"/>
<dbReference type="OMA" id="SELSHMI"/>
<dbReference type="OrthoDB" id="9538521at2759"/>
<dbReference type="PAN-GO" id="P04259">
    <property type="GO annotations" value="4 GO annotations based on evolutionary models"/>
</dbReference>
<dbReference type="PhylomeDB" id="P04259"/>
<dbReference type="TreeFam" id="TF317854"/>
<dbReference type="PathwayCommons" id="P04259"/>
<dbReference type="Reactome" id="R-HSA-6805567">
    <property type="pathway name" value="Keratinization"/>
</dbReference>
<dbReference type="Reactome" id="R-HSA-6809371">
    <property type="pathway name" value="Formation of the cornified envelope"/>
</dbReference>
<dbReference type="SignaLink" id="P04259"/>
<dbReference type="BioGRID-ORCS" id="3854">
    <property type="hits" value="14 hits in 1058 CRISPR screens"/>
</dbReference>
<dbReference type="ChiTaRS" id="KRT6B">
    <property type="organism name" value="human"/>
</dbReference>
<dbReference type="GenomeRNAi" id="3854"/>
<dbReference type="Pharos" id="P04259">
    <property type="development level" value="Tbio"/>
</dbReference>
<dbReference type="PRO" id="PR:P04259"/>
<dbReference type="Proteomes" id="UP000005640">
    <property type="component" value="Chromosome 12"/>
</dbReference>
<dbReference type="RNAct" id="P04259">
    <property type="molecule type" value="protein"/>
</dbReference>
<dbReference type="Bgee" id="ENSG00000185479">
    <property type="expression patterns" value="Expressed in gingiva and 105 other cell types or tissues"/>
</dbReference>
<dbReference type="GO" id="GO:0005829">
    <property type="term" value="C:cytosol"/>
    <property type="evidence" value="ECO:0000304"/>
    <property type="project" value="Reactome"/>
</dbReference>
<dbReference type="GO" id="GO:0070062">
    <property type="term" value="C:extracellular exosome"/>
    <property type="evidence" value="ECO:0007005"/>
    <property type="project" value="UniProtKB"/>
</dbReference>
<dbReference type="GO" id="GO:0045095">
    <property type="term" value="C:keratin filament"/>
    <property type="evidence" value="ECO:0000318"/>
    <property type="project" value="GO_Central"/>
</dbReference>
<dbReference type="GO" id="GO:0005200">
    <property type="term" value="F:structural constituent of cytoskeleton"/>
    <property type="evidence" value="ECO:0000304"/>
    <property type="project" value="ProtInc"/>
</dbReference>
<dbReference type="GO" id="GO:0030280">
    <property type="term" value="F:structural constituent of skin epidermis"/>
    <property type="evidence" value="ECO:0000318"/>
    <property type="project" value="GO_Central"/>
</dbReference>
<dbReference type="GO" id="GO:0007398">
    <property type="term" value="P:ectoderm development"/>
    <property type="evidence" value="ECO:0000304"/>
    <property type="project" value="ProtInc"/>
</dbReference>
<dbReference type="GO" id="GO:0045109">
    <property type="term" value="P:intermediate filament organization"/>
    <property type="evidence" value="ECO:0000318"/>
    <property type="project" value="GO_Central"/>
</dbReference>
<dbReference type="GO" id="GO:0031424">
    <property type="term" value="P:keratinization"/>
    <property type="evidence" value="ECO:0000318"/>
    <property type="project" value="GO_Central"/>
</dbReference>
<dbReference type="FunFam" id="1.20.5.1160:FF:000001">
    <property type="entry name" value="Keratin type II"/>
    <property type="match status" value="1"/>
</dbReference>
<dbReference type="FunFam" id="1.20.5.170:FF:000004">
    <property type="entry name" value="Keratin, type II cytoskeletal 5"/>
    <property type="match status" value="1"/>
</dbReference>
<dbReference type="FunFam" id="1.20.5.500:FF:000001">
    <property type="entry name" value="Type II keratin 23"/>
    <property type="match status" value="1"/>
</dbReference>
<dbReference type="Gene3D" id="1.20.5.170">
    <property type="match status" value="1"/>
</dbReference>
<dbReference type="Gene3D" id="1.20.5.500">
    <property type="entry name" value="Single helix bin"/>
    <property type="match status" value="1"/>
</dbReference>
<dbReference type="Gene3D" id="1.20.5.1160">
    <property type="entry name" value="Vasodilator-stimulated phosphoprotein"/>
    <property type="match status" value="1"/>
</dbReference>
<dbReference type="InterPro" id="IPR018039">
    <property type="entry name" value="IF_conserved"/>
</dbReference>
<dbReference type="InterPro" id="IPR039008">
    <property type="entry name" value="IF_rod_dom"/>
</dbReference>
<dbReference type="InterPro" id="IPR032444">
    <property type="entry name" value="Keratin_2_head"/>
</dbReference>
<dbReference type="InterPro" id="IPR003054">
    <property type="entry name" value="Keratin_II"/>
</dbReference>
<dbReference type="PANTHER" id="PTHR45616">
    <property type="entry name" value="GATA-TYPE DOMAIN-CONTAINING PROTEIN"/>
    <property type="match status" value="1"/>
</dbReference>
<dbReference type="PANTHER" id="PTHR45616:SF39">
    <property type="entry name" value="KERATIN, TYPE II CYTOSKELETAL 6A-RELATED"/>
    <property type="match status" value="1"/>
</dbReference>
<dbReference type="Pfam" id="PF00038">
    <property type="entry name" value="Filament"/>
    <property type="match status" value="1"/>
</dbReference>
<dbReference type="Pfam" id="PF16208">
    <property type="entry name" value="Keratin_2_head"/>
    <property type="match status" value="1"/>
</dbReference>
<dbReference type="PRINTS" id="PR01276">
    <property type="entry name" value="TYPE2KERATIN"/>
</dbReference>
<dbReference type="SMART" id="SM01391">
    <property type="entry name" value="Filament"/>
    <property type="match status" value="1"/>
</dbReference>
<dbReference type="SUPFAM" id="SSF64593">
    <property type="entry name" value="Intermediate filament protein, coiled coil region"/>
    <property type="match status" value="3"/>
</dbReference>
<dbReference type="PROSITE" id="PS00226">
    <property type="entry name" value="IF_ROD_1"/>
    <property type="match status" value="1"/>
</dbReference>
<dbReference type="PROSITE" id="PS51842">
    <property type="entry name" value="IF_ROD_2"/>
    <property type="match status" value="1"/>
</dbReference>
<protein>
    <recommendedName>
        <fullName>Keratin, type II cytoskeletal 6B</fullName>
    </recommendedName>
    <alternativeName>
        <fullName>Cytokeratin-6B</fullName>
        <shortName>CK-6B</shortName>
    </alternativeName>
    <alternativeName>
        <fullName>Keratin-6B</fullName>
        <shortName>K6B</shortName>
    </alternativeName>
    <alternativeName>
        <fullName>Type-II keratin Kb10</fullName>
    </alternativeName>
</protein>
<evidence type="ECO:0000255" key="1">
    <source>
        <dbReference type="PROSITE-ProRule" id="PRU01188"/>
    </source>
</evidence>
<evidence type="ECO:0000256" key="2">
    <source>
        <dbReference type="SAM" id="MobiDB-lite"/>
    </source>
</evidence>
<evidence type="ECO:0000269" key="3">
    <source>
    </source>
</evidence>
<evidence type="ECO:0000269" key="4">
    <source>
    </source>
</evidence>
<evidence type="ECO:0000269" key="5">
    <source>
    </source>
</evidence>
<evidence type="ECO:0000269" key="6">
    <source>
    </source>
</evidence>
<evidence type="ECO:0000269" key="7">
    <source>
    </source>
</evidence>
<evidence type="ECO:0000269" key="8">
    <source ref="5"/>
</evidence>
<evidence type="ECO:0000305" key="9"/>
<comment type="subunit">
    <text>Heterodimer of a type I and a type II keratin. KRT6 isomers associate with KRT16 and/or KRT17.</text>
</comment>
<comment type="interaction">
    <interactant intactId="EBI-740907">
        <id>P04259</id>
    </interactant>
    <interactant intactId="EBI-618309">
        <id>Q08379</id>
        <label>GOLGA2</label>
    </interactant>
    <organismsDiffer>false</organismsDiffer>
    <experiments>3</experiments>
</comment>
<comment type="interaction">
    <interactant intactId="EBI-740907">
        <id>P04259</id>
    </interactant>
    <interactant intactId="EBI-2125614">
        <id>Q9BVG8</id>
        <label>KIFC3</label>
    </interactant>
    <organismsDiffer>false</organismsDiffer>
    <experiments>3</experiments>
</comment>
<comment type="interaction">
    <interactant intactId="EBI-740907">
        <id>P04259</id>
    </interactant>
    <interactant intactId="EBI-14069005">
        <id>Q9BVG8-5</id>
        <label>KIFC3</label>
    </interactant>
    <organismsDiffer>false</organismsDiffer>
    <experiments>3</experiments>
</comment>
<comment type="interaction">
    <interactant intactId="EBI-740907">
        <id>P04259</id>
    </interactant>
    <interactant intactId="EBI-10171552">
        <id>A1A4E9</id>
        <label>KRT13</label>
    </interactant>
    <organismsDiffer>false</organismsDiffer>
    <experiments>3</experiments>
</comment>
<comment type="interaction">
    <interactant intactId="EBI-740907">
        <id>P04259</id>
    </interactant>
    <interactant intactId="EBI-1223876">
        <id>P13646</id>
        <label>KRT13</label>
    </interactant>
    <organismsDiffer>false</organismsDiffer>
    <experiments>3</experiments>
</comment>
<comment type="interaction">
    <interactant intactId="EBI-740907">
        <id>P04259</id>
    </interactant>
    <interactant intactId="EBI-739566">
        <id>P19012</id>
        <label>KRT15</label>
    </interactant>
    <organismsDiffer>false</organismsDiffer>
    <experiments>7</experiments>
</comment>
<comment type="interaction">
    <interactant intactId="EBI-740907">
        <id>P04259</id>
    </interactant>
    <interactant intactId="EBI-742756">
        <id>P08727</id>
        <label>KRT19</label>
    </interactant>
    <organismsDiffer>false</organismsDiffer>
    <experiments>4</experiments>
</comment>
<comment type="interaction">
    <interactant intactId="EBI-740907">
        <id>P04259</id>
    </interactant>
    <interactant intactId="EBI-11980019">
        <id>Q7Z3Z0</id>
        <label>KRT25</label>
    </interactant>
    <organismsDiffer>false</organismsDiffer>
    <experiments>3</experiments>
</comment>
<comment type="interaction">
    <interactant intactId="EBI-740907">
        <id>P04259</id>
    </interactant>
    <interactant intactId="EBI-3044087">
        <id>Q7Z3Y8</id>
        <label>KRT27</label>
    </interactant>
    <organismsDiffer>false</organismsDiffer>
    <experiments>3</experiments>
</comment>
<comment type="interaction">
    <interactant intactId="EBI-740907">
        <id>P04259</id>
    </interactant>
    <interactant intactId="EBI-11980489">
        <id>Q7Z3Y7</id>
        <label>KRT28</label>
    </interactant>
    <organismsDiffer>false</organismsDiffer>
    <experiments>5</experiments>
</comment>
<comment type="interaction">
    <interactant intactId="EBI-740907">
        <id>P04259</id>
    </interactant>
    <interactant intactId="EBI-948001">
        <id>Q15323</id>
        <label>KRT31</label>
    </interactant>
    <organismsDiffer>false</organismsDiffer>
    <experiments>6</experiments>
</comment>
<comment type="interaction">
    <interactant intactId="EBI-740907">
        <id>P04259</id>
    </interactant>
    <interactant intactId="EBI-1049638">
        <id>Q14525</id>
        <label>KRT33B</label>
    </interactant>
    <organismsDiffer>false</organismsDiffer>
    <experiments>5</experiments>
</comment>
<comment type="interaction">
    <interactant intactId="EBI-740907">
        <id>P04259</id>
    </interactant>
    <interactant intactId="EBI-1058674">
        <id>Q92764</id>
        <label>KRT35</label>
    </interactant>
    <organismsDiffer>false</organismsDiffer>
    <experiments>3</experiments>
</comment>
<comment type="interaction">
    <interactant intactId="EBI-740907">
        <id>P04259</id>
    </interactant>
    <interactant intactId="EBI-1045716">
        <id>O76014</id>
        <label>KRT37</label>
    </interactant>
    <organismsDiffer>false</organismsDiffer>
    <experiments>3</experiments>
</comment>
<comment type="interaction">
    <interactant intactId="EBI-740907">
        <id>P04259</id>
    </interactant>
    <interactant intactId="EBI-1047263">
        <id>O76015</id>
        <label>KRT38</label>
    </interactant>
    <organismsDiffer>false</organismsDiffer>
    <experiments>8</experiments>
</comment>
<comment type="interaction">
    <interactant intactId="EBI-740907">
        <id>P04259</id>
    </interactant>
    <interactant intactId="EBI-11958242">
        <id>Q6A163</id>
        <label>KRT39</label>
    </interactant>
    <organismsDiffer>false</organismsDiffer>
    <experiments>3</experiments>
</comment>
<comment type="interaction">
    <interactant intactId="EBI-740907">
        <id>P04259</id>
    </interactant>
    <interactant intactId="EBI-10171697">
        <id>Q6A162</id>
        <label>KRT40</label>
    </interactant>
    <organismsDiffer>false</organismsDiffer>
    <experiments>3</experiments>
</comment>
<comment type="interaction">
    <interactant intactId="EBI-740907">
        <id>P04259</id>
    </interactant>
    <interactant intactId="EBI-715849">
        <id>O14777</id>
        <label>NDC80</label>
    </interactant>
    <organismsDiffer>false</organismsDiffer>
    <experiments>3</experiments>
</comment>
<comment type="interaction">
    <interactant intactId="EBI-740907">
        <id>P04259</id>
    </interactant>
    <interactant intactId="EBI-347978">
        <id>P37198</id>
        <label>NUP62</label>
    </interactant>
    <organismsDiffer>false</organismsDiffer>
    <experiments>3</experiments>
</comment>
<comment type="interaction">
    <interactant intactId="EBI-740907">
        <id>P04259</id>
    </interactant>
    <interactant intactId="EBI-536879">
        <id>O43482</id>
        <label>OIP5</label>
    </interactant>
    <organismsDiffer>false</organismsDiffer>
    <experiments>3</experiments>
</comment>
<comment type="interaction">
    <interactant intactId="EBI-740907">
        <id>P04259</id>
    </interactant>
    <interactant intactId="EBI-11523345">
        <id>Q8IYF3-3</id>
        <label>TEX11</label>
    </interactant>
    <organismsDiffer>false</organismsDiffer>
    <experiments>3</experiments>
</comment>
<comment type="interaction">
    <interactant intactId="EBI-740907">
        <id>P04259</id>
    </interactant>
    <interactant intactId="EBI-1105213">
        <id>Q9UBB9</id>
        <label>TFIP11</label>
    </interactant>
    <organismsDiffer>false</organismsDiffer>
    <experiments>6</experiments>
</comment>
<comment type="interaction">
    <interactant intactId="EBI-740907">
        <id>P04259</id>
    </interactant>
    <interactant intactId="EBI-2130429">
        <id>Q9BYV2</id>
        <label>TRIM54</label>
    </interactant>
    <organismsDiffer>false</organismsDiffer>
    <experiments>6</experiments>
</comment>
<comment type="interaction">
    <interactant intactId="EBI-740907">
        <id>P04259</id>
    </interactant>
    <interactant intactId="EBI-10964469">
        <id>Q9UGJ1-2</id>
        <label>TUBGCP4</label>
    </interactant>
    <organismsDiffer>false</organismsDiffer>
    <experiments>3</experiments>
</comment>
<comment type="tissue specificity">
    <text>Constitutively expressed in distinct types of epithelia such as those in oral mucosa, esophagus, papillae of tongue and hair follicle outer root sheath.</text>
</comment>
<comment type="disease" evidence="3 4 7">
    <disease id="DI-04095">
        <name>Pachyonychia congenita 4</name>
        <acronym>PC4</acronym>
        <description>An autosomal dominant genodermatosis characterized by hypertrophic nail dystrophy, painful and highly debilitating plantar keratoderma, oral leukokeratosis, and a variety of epidermal cysts.</description>
        <dbReference type="MIM" id="615728"/>
    </disease>
    <text>The disease is caused by variants affecting the gene represented in this entry.</text>
</comment>
<comment type="miscellaneous">
    <text>There are at least six isoforms of human type II keratin-6 (K6).</text>
</comment>
<comment type="miscellaneous">
    <text>There are two types of cytoskeletal and microfibrillar keratin, I (acidic) and II (neutral to basic) (40-55 and 56-70 kDa, respectively).</text>
</comment>
<comment type="similarity">
    <text evidence="1">Belongs to the intermediate filament family.</text>
</comment>
<name>K2C6B_HUMAN</name>
<gene>
    <name type="primary">KRT6B</name>
    <name type="synonym">K6B</name>
    <name type="synonym">KRTL1</name>
</gene>